<accession>Q3ALW7</accession>
<gene>
    <name evidence="1" type="primary">gltX</name>
    <name type="ordered locus">Syncc9605_0641</name>
</gene>
<keyword id="KW-0030">Aminoacyl-tRNA synthetase</keyword>
<keyword id="KW-0067">ATP-binding</keyword>
<keyword id="KW-0963">Cytoplasm</keyword>
<keyword id="KW-0436">Ligase</keyword>
<keyword id="KW-0547">Nucleotide-binding</keyword>
<keyword id="KW-0648">Protein biosynthesis</keyword>
<sequence>MVRVRLAPSPTGTLHIGTARTAVFNWLYAKHEQGAFVLRIEDTDKERSKPEYTQNILEGLQWLGINWDEEPVIQSERVAQHREAIQTLLDRGLAYRCYASETELTAMRDAQKAANQAPRYDNRHRTLTPEQEQAFQTEGREAVIRFRIDDAAEIRWNDLVRGAMSWRGSDLGGDMVIARRAPADQIGDPLYNLVVVVDDASMEITHVIRGEDHIANTAKQLLLYEALGLPLPTFAHAPLILNAEGRKLSKRDGVTSINDFRAMGYTPDAIANYMTLLGWSVPEGMEEQFSLCEAAAVFGFDRVNKAGARFDWDKLNWLNAQVLHGWTADHLLEELTPLWAERGWTPPSEKSWCLDLCALLGPSLTLLKDGVDQAEPFFDRPDLQEDALKQLGIEGAKAAMADLLQRLENNPWDGSDVDQAKAWLGDAAKAADVKKGVVMKSLRAALLGRLQGPDLITTWSLLARIGEDLPRLRRCLG</sequence>
<evidence type="ECO:0000255" key="1">
    <source>
        <dbReference type="HAMAP-Rule" id="MF_00022"/>
    </source>
</evidence>
<feature type="chain" id="PRO_0000237409" description="Glutamate--tRNA ligase">
    <location>
        <begin position="1"/>
        <end position="477"/>
    </location>
</feature>
<feature type="short sequence motif" description="'HIGH' region" evidence="1">
    <location>
        <begin position="8"/>
        <end position="18"/>
    </location>
</feature>
<feature type="short sequence motif" description="'KMSKS' region" evidence="1">
    <location>
        <begin position="247"/>
        <end position="251"/>
    </location>
</feature>
<feature type="binding site" evidence="1">
    <location>
        <position position="250"/>
    </location>
    <ligand>
        <name>ATP</name>
        <dbReference type="ChEBI" id="CHEBI:30616"/>
    </ligand>
</feature>
<organism>
    <name type="scientific">Synechococcus sp. (strain CC9605)</name>
    <dbReference type="NCBI Taxonomy" id="110662"/>
    <lineage>
        <taxon>Bacteria</taxon>
        <taxon>Bacillati</taxon>
        <taxon>Cyanobacteriota</taxon>
        <taxon>Cyanophyceae</taxon>
        <taxon>Synechococcales</taxon>
        <taxon>Synechococcaceae</taxon>
        <taxon>Synechococcus</taxon>
    </lineage>
</organism>
<proteinExistence type="inferred from homology"/>
<comment type="function">
    <text evidence="1">Catalyzes the attachment of glutamate to tRNA(Glu) in a two-step reaction: glutamate is first activated by ATP to form Glu-AMP and then transferred to the acceptor end of tRNA(Glu).</text>
</comment>
<comment type="catalytic activity">
    <reaction evidence="1">
        <text>tRNA(Glu) + L-glutamate + ATP = L-glutamyl-tRNA(Glu) + AMP + diphosphate</text>
        <dbReference type="Rhea" id="RHEA:23540"/>
        <dbReference type="Rhea" id="RHEA-COMP:9663"/>
        <dbReference type="Rhea" id="RHEA-COMP:9680"/>
        <dbReference type="ChEBI" id="CHEBI:29985"/>
        <dbReference type="ChEBI" id="CHEBI:30616"/>
        <dbReference type="ChEBI" id="CHEBI:33019"/>
        <dbReference type="ChEBI" id="CHEBI:78442"/>
        <dbReference type="ChEBI" id="CHEBI:78520"/>
        <dbReference type="ChEBI" id="CHEBI:456215"/>
        <dbReference type="EC" id="6.1.1.17"/>
    </reaction>
</comment>
<comment type="subunit">
    <text evidence="1">Monomer.</text>
</comment>
<comment type="subcellular location">
    <subcellularLocation>
        <location evidence="1">Cytoplasm</location>
    </subcellularLocation>
</comment>
<comment type="similarity">
    <text evidence="1">Belongs to the class-I aminoacyl-tRNA synthetase family. Glutamate--tRNA ligase type 1 subfamily.</text>
</comment>
<dbReference type="EC" id="6.1.1.17" evidence="1"/>
<dbReference type="EMBL" id="CP000110">
    <property type="protein sequence ID" value="ABB34415.1"/>
    <property type="molecule type" value="Genomic_DNA"/>
</dbReference>
<dbReference type="RefSeq" id="WP_011363643.1">
    <property type="nucleotide sequence ID" value="NC_007516.1"/>
</dbReference>
<dbReference type="SMR" id="Q3ALW7"/>
<dbReference type="STRING" id="110662.Syncc9605_0641"/>
<dbReference type="KEGG" id="syd:Syncc9605_0641"/>
<dbReference type="eggNOG" id="COG0008">
    <property type="taxonomic scope" value="Bacteria"/>
</dbReference>
<dbReference type="HOGENOM" id="CLU_015768_6_0_3"/>
<dbReference type="OrthoDB" id="9807503at2"/>
<dbReference type="GO" id="GO:0005829">
    <property type="term" value="C:cytosol"/>
    <property type="evidence" value="ECO:0007669"/>
    <property type="project" value="TreeGrafter"/>
</dbReference>
<dbReference type="GO" id="GO:0005524">
    <property type="term" value="F:ATP binding"/>
    <property type="evidence" value="ECO:0007669"/>
    <property type="project" value="UniProtKB-UniRule"/>
</dbReference>
<dbReference type="GO" id="GO:0004818">
    <property type="term" value="F:glutamate-tRNA ligase activity"/>
    <property type="evidence" value="ECO:0007669"/>
    <property type="project" value="UniProtKB-UniRule"/>
</dbReference>
<dbReference type="GO" id="GO:0000049">
    <property type="term" value="F:tRNA binding"/>
    <property type="evidence" value="ECO:0007669"/>
    <property type="project" value="InterPro"/>
</dbReference>
<dbReference type="GO" id="GO:0008270">
    <property type="term" value="F:zinc ion binding"/>
    <property type="evidence" value="ECO:0007669"/>
    <property type="project" value="InterPro"/>
</dbReference>
<dbReference type="GO" id="GO:0006424">
    <property type="term" value="P:glutamyl-tRNA aminoacylation"/>
    <property type="evidence" value="ECO:0007669"/>
    <property type="project" value="UniProtKB-UniRule"/>
</dbReference>
<dbReference type="CDD" id="cd00808">
    <property type="entry name" value="GluRS_core"/>
    <property type="match status" value="1"/>
</dbReference>
<dbReference type="FunFam" id="3.40.50.620:FF:000007">
    <property type="entry name" value="Glutamate--tRNA ligase"/>
    <property type="match status" value="1"/>
</dbReference>
<dbReference type="Gene3D" id="1.10.10.350">
    <property type="match status" value="1"/>
</dbReference>
<dbReference type="Gene3D" id="1.10.8.70">
    <property type="entry name" value="Glutamate-tRNA synthetase, class I, anticodon-binding domain 1"/>
    <property type="match status" value="1"/>
</dbReference>
<dbReference type="Gene3D" id="1.10.1160.10">
    <property type="entry name" value="Glutamyl-trna Synthetase, Domain 2"/>
    <property type="match status" value="1"/>
</dbReference>
<dbReference type="Gene3D" id="3.90.800.10">
    <property type="entry name" value="Glutamyl-tRNA Synthetase, Domain 3"/>
    <property type="match status" value="1"/>
</dbReference>
<dbReference type="Gene3D" id="3.40.50.620">
    <property type="entry name" value="HUPs"/>
    <property type="match status" value="1"/>
</dbReference>
<dbReference type="HAMAP" id="MF_00022">
    <property type="entry name" value="Glu_tRNA_synth_type1"/>
    <property type="match status" value="1"/>
</dbReference>
<dbReference type="InterPro" id="IPR045462">
    <property type="entry name" value="aa-tRNA-synth_I_cd-bd"/>
</dbReference>
<dbReference type="InterPro" id="IPR020751">
    <property type="entry name" value="aa-tRNA-synth_I_codon-bd_sub2"/>
</dbReference>
<dbReference type="InterPro" id="IPR001412">
    <property type="entry name" value="aa-tRNA-synth_I_CS"/>
</dbReference>
<dbReference type="InterPro" id="IPR008925">
    <property type="entry name" value="aa_tRNA-synth_I_cd-bd_sf"/>
</dbReference>
<dbReference type="InterPro" id="IPR004527">
    <property type="entry name" value="Glu-tRNA-ligase_bac/mito"/>
</dbReference>
<dbReference type="InterPro" id="IPR020752">
    <property type="entry name" value="Glu-tRNA-synth_I_codon-bd_sub1"/>
</dbReference>
<dbReference type="InterPro" id="IPR000924">
    <property type="entry name" value="Glu/Gln-tRNA-synth"/>
</dbReference>
<dbReference type="InterPro" id="IPR020058">
    <property type="entry name" value="Glu/Gln-tRNA-synth_Ib_cat-dom"/>
</dbReference>
<dbReference type="InterPro" id="IPR020061">
    <property type="entry name" value="Glu_tRNA_lig_a-bdl"/>
</dbReference>
<dbReference type="InterPro" id="IPR049940">
    <property type="entry name" value="GluQ/Sye"/>
</dbReference>
<dbReference type="InterPro" id="IPR033910">
    <property type="entry name" value="GluRS_core"/>
</dbReference>
<dbReference type="InterPro" id="IPR014729">
    <property type="entry name" value="Rossmann-like_a/b/a_fold"/>
</dbReference>
<dbReference type="NCBIfam" id="TIGR00464">
    <property type="entry name" value="gltX_bact"/>
    <property type="match status" value="1"/>
</dbReference>
<dbReference type="NCBIfam" id="NF004315">
    <property type="entry name" value="PRK05710.1-4"/>
    <property type="match status" value="1"/>
</dbReference>
<dbReference type="PANTHER" id="PTHR43311">
    <property type="entry name" value="GLUTAMATE--TRNA LIGASE"/>
    <property type="match status" value="1"/>
</dbReference>
<dbReference type="PANTHER" id="PTHR43311:SF2">
    <property type="entry name" value="GLUTAMATE--TRNA LIGASE, MITOCHONDRIAL-RELATED"/>
    <property type="match status" value="1"/>
</dbReference>
<dbReference type="Pfam" id="PF19269">
    <property type="entry name" value="Anticodon_2"/>
    <property type="match status" value="1"/>
</dbReference>
<dbReference type="Pfam" id="PF00749">
    <property type="entry name" value="tRNA-synt_1c"/>
    <property type="match status" value="1"/>
</dbReference>
<dbReference type="PRINTS" id="PR00987">
    <property type="entry name" value="TRNASYNTHGLU"/>
</dbReference>
<dbReference type="SUPFAM" id="SSF48163">
    <property type="entry name" value="An anticodon-binding domain of class I aminoacyl-tRNA synthetases"/>
    <property type="match status" value="1"/>
</dbReference>
<dbReference type="SUPFAM" id="SSF52374">
    <property type="entry name" value="Nucleotidylyl transferase"/>
    <property type="match status" value="1"/>
</dbReference>
<dbReference type="PROSITE" id="PS00178">
    <property type="entry name" value="AA_TRNA_LIGASE_I"/>
    <property type="match status" value="1"/>
</dbReference>
<name>SYE_SYNSC</name>
<protein>
    <recommendedName>
        <fullName evidence="1">Glutamate--tRNA ligase</fullName>
        <ecNumber evidence="1">6.1.1.17</ecNumber>
    </recommendedName>
    <alternativeName>
        <fullName evidence="1">Glutamyl-tRNA synthetase</fullName>
        <shortName evidence="1">GluRS</shortName>
    </alternativeName>
</protein>
<reference key="1">
    <citation type="submission" date="2005-07" db="EMBL/GenBank/DDBJ databases">
        <title>Complete sequence of Synechococcus sp. CC9605.</title>
        <authorList>
            <consortium name="US DOE Joint Genome Institute"/>
            <person name="Copeland A."/>
            <person name="Lucas S."/>
            <person name="Lapidus A."/>
            <person name="Barry K."/>
            <person name="Detter J.C."/>
            <person name="Glavina T."/>
            <person name="Hammon N."/>
            <person name="Israni S."/>
            <person name="Pitluck S."/>
            <person name="Schmutz J."/>
            <person name="Martinez M."/>
            <person name="Larimer F."/>
            <person name="Land M."/>
            <person name="Kyrpides N."/>
            <person name="Ivanova N."/>
            <person name="Richardson P."/>
        </authorList>
    </citation>
    <scope>NUCLEOTIDE SEQUENCE [LARGE SCALE GENOMIC DNA]</scope>
    <source>
        <strain>CC9605</strain>
    </source>
</reference>